<name>RL18E_METB6</name>
<evidence type="ECO:0000255" key="1">
    <source>
        <dbReference type="HAMAP-Rule" id="MF_00329"/>
    </source>
</evidence>
<evidence type="ECO:0000305" key="2"/>
<reference key="1">
    <citation type="journal article" date="2015" name="Microbiology">
        <title>Genome of Methanoregula boonei 6A8 reveals adaptations to oligotrophic peatland environments.</title>
        <authorList>
            <person name="Braeuer S."/>
            <person name="Cadillo-Quiroz H."/>
            <person name="Kyrpides N."/>
            <person name="Woyke T."/>
            <person name="Goodwin L."/>
            <person name="Detter C."/>
            <person name="Podell S."/>
            <person name="Yavitt J.B."/>
            <person name="Zinder S.H."/>
        </authorList>
    </citation>
    <scope>NUCLEOTIDE SEQUENCE [LARGE SCALE GENOMIC DNA]</scope>
    <source>
        <strain>DSM 21154 / JCM 14090 / 6A8</strain>
    </source>
</reference>
<proteinExistence type="inferred from homology"/>
<keyword id="KW-1185">Reference proteome</keyword>
<keyword id="KW-0687">Ribonucleoprotein</keyword>
<keyword id="KW-0689">Ribosomal protein</keyword>
<accession>A7IAH4</accession>
<dbReference type="EMBL" id="CP000780">
    <property type="protein sequence ID" value="ABS56735.1"/>
    <property type="molecule type" value="Genomic_DNA"/>
</dbReference>
<dbReference type="RefSeq" id="WP_012107795.1">
    <property type="nucleotide sequence ID" value="NC_009712.1"/>
</dbReference>
<dbReference type="SMR" id="A7IAH4"/>
<dbReference type="STRING" id="456442.Mboo_2221"/>
<dbReference type="GeneID" id="5410156"/>
<dbReference type="KEGG" id="mbn:Mboo_2221"/>
<dbReference type="eggNOG" id="arCOG00780">
    <property type="taxonomic scope" value="Archaea"/>
</dbReference>
<dbReference type="HOGENOM" id="CLU_146465_0_0_2"/>
<dbReference type="OrthoDB" id="11309at2157"/>
<dbReference type="Proteomes" id="UP000002408">
    <property type="component" value="Chromosome"/>
</dbReference>
<dbReference type="GO" id="GO:0022625">
    <property type="term" value="C:cytosolic large ribosomal subunit"/>
    <property type="evidence" value="ECO:0007669"/>
    <property type="project" value="TreeGrafter"/>
</dbReference>
<dbReference type="GO" id="GO:0003723">
    <property type="term" value="F:RNA binding"/>
    <property type="evidence" value="ECO:0007669"/>
    <property type="project" value="TreeGrafter"/>
</dbReference>
<dbReference type="GO" id="GO:0003735">
    <property type="term" value="F:structural constituent of ribosome"/>
    <property type="evidence" value="ECO:0007669"/>
    <property type="project" value="InterPro"/>
</dbReference>
<dbReference type="GO" id="GO:0006412">
    <property type="term" value="P:translation"/>
    <property type="evidence" value="ECO:0007669"/>
    <property type="project" value="UniProtKB-UniRule"/>
</dbReference>
<dbReference type="FunFam" id="3.100.10.10:FF:000013">
    <property type="entry name" value="50S ribosomal protein L18e"/>
    <property type="match status" value="1"/>
</dbReference>
<dbReference type="Gene3D" id="3.100.10.10">
    <property type="match status" value="1"/>
</dbReference>
<dbReference type="HAMAP" id="MF_00329">
    <property type="entry name" value="Ribosomal_eL18"/>
    <property type="match status" value="1"/>
</dbReference>
<dbReference type="InterPro" id="IPR000039">
    <property type="entry name" value="Ribosomal_eL18"/>
</dbReference>
<dbReference type="InterPro" id="IPR022947">
    <property type="entry name" value="Ribosomal_eL18_arc"/>
</dbReference>
<dbReference type="InterPro" id="IPR021131">
    <property type="entry name" value="Ribosomal_uL15/eL18"/>
</dbReference>
<dbReference type="InterPro" id="IPR036227">
    <property type="entry name" value="Ribosomal_uL15/eL18_sf"/>
</dbReference>
<dbReference type="NCBIfam" id="NF003079">
    <property type="entry name" value="PRK04005.1"/>
    <property type="match status" value="1"/>
</dbReference>
<dbReference type="PANTHER" id="PTHR10934">
    <property type="entry name" value="60S RIBOSOMAL PROTEIN L18"/>
    <property type="match status" value="1"/>
</dbReference>
<dbReference type="PANTHER" id="PTHR10934:SF2">
    <property type="entry name" value="LARGE RIBOSOMAL SUBUNIT PROTEIN EL18"/>
    <property type="match status" value="1"/>
</dbReference>
<dbReference type="Pfam" id="PF17135">
    <property type="entry name" value="Ribosomal_L18"/>
    <property type="match status" value="1"/>
</dbReference>
<dbReference type="SUPFAM" id="SSF52080">
    <property type="entry name" value="Ribosomal proteins L15p and L18e"/>
    <property type="match status" value="1"/>
</dbReference>
<organism>
    <name type="scientific">Methanoregula boonei (strain DSM 21154 / JCM 14090 / 6A8)</name>
    <dbReference type="NCBI Taxonomy" id="456442"/>
    <lineage>
        <taxon>Archaea</taxon>
        <taxon>Methanobacteriati</taxon>
        <taxon>Methanobacteriota</taxon>
        <taxon>Stenosarchaea group</taxon>
        <taxon>Methanomicrobia</taxon>
        <taxon>Methanomicrobiales</taxon>
        <taxon>Methanoregulaceae</taxon>
        <taxon>Methanoregula</taxon>
    </lineage>
</organism>
<comment type="similarity">
    <text evidence="1">Belongs to the eukaryotic ribosomal protein eL18 family.</text>
</comment>
<gene>
    <name evidence="1" type="primary">rpl18e</name>
    <name type="ordered locus">Mboo_2221</name>
</gene>
<sequence length="121" mass="13521">MTRTVEKTNPRLTNLILLLKNTSRENEAKIWREIAGRLETPNRNYAEVNLSKINRYAQKGETIIVPGKVLGSGVLDQSVRIAALNFSESATSKIRDAKGQCMTIEQLLKDNPKGSGVRILR</sequence>
<protein>
    <recommendedName>
        <fullName evidence="1">Large ribosomal subunit protein eL18</fullName>
    </recommendedName>
    <alternativeName>
        <fullName evidence="2">50S ribosomal protein L18e</fullName>
    </alternativeName>
</protein>
<feature type="chain" id="PRO_1000005042" description="Large ribosomal subunit protein eL18">
    <location>
        <begin position="1"/>
        <end position="121"/>
    </location>
</feature>